<protein>
    <recommendedName>
        <fullName evidence="1">Coproheme decarboxylase</fullName>
        <ecNumber evidence="1">1.3.98.5</ecNumber>
    </recommendedName>
    <alternativeName>
        <fullName evidence="1">Coproheme III oxidative decarboxylase</fullName>
    </alternativeName>
    <alternativeName>
        <fullName evidence="1">Hydrogen peroxide-dependent heme synthase</fullName>
    </alternativeName>
</protein>
<reference key="1">
    <citation type="journal article" date="2006" name="J. Bacteriol.">
        <title>Pathogenomic sequence analysis of Bacillus cereus and Bacillus thuringiensis isolates closely related to Bacillus anthracis.</title>
        <authorList>
            <person name="Han C.S."/>
            <person name="Xie G."/>
            <person name="Challacombe J.F."/>
            <person name="Altherr M.R."/>
            <person name="Bhotika S.S."/>
            <person name="Bruce D."/>
            <person name="Campbell C.S."/>
            <person name="Campbell M.L."/>
            <person name="Chen J."/>
            <person name="Chertkov O."/>
            <person name="Cleland C."/>
            <person name="Dimitrijevic M."/>
            <person name="Doggett N.A."/>
            <person name="Fawcett J.J."/>
            <person name="Glavina T."/>
            <person name="Goodwin L.A."/>
            <person name="Hill K.K."/>
            <person name="Hitchcock P."/>
            <person name="Jackson P.J."/>
            <person name="Keim P."/>
            <person name="Kewalramani A.R."/>
            <person name="Longmire J."/>
            <person name="Lucas S."/>
            <person name="Malfatti S."/>
            <person name="McMurry K."/>
            <person name="Meincke L.J."/>
            <person name="Misra M."/>
            <person name="Moseman B.L."/>
            <person name="Mundt M."/>
            <person name="Munk A.C."/>
            <person name="Okinaka R.T."/>
            <person name="Parson-Quintana B."/>
            <person name="Reilly L.P."/>
            <person name="Richardson P."/>
            <person name="Robinson D.L."/>
            <person name="Rubin E."/>
            <person name="Saunders E."/>
            <person name="Tapia R."/>
            <person name="Tesmer J.G."/>
            <person name="Thayer N."/>
            <person name="Thompson L.S."/>
            <person name="Tice H."/>
            <person name="Ticknor L.O."/>
            <person name="Wills P.L."/>
            <person name="Brettin T.S."/>
            <person name="Gilna P."/>
        </authorList>
    </citation>
    <scope>NUCLEOTIDE SEQUENCE [LARGE SCALE GENOMIC DNA]</scope>
    <source>
        <strain>ZK / E33L</strain>
    </source>
</reference>
<comment type="function">
    <text evidence="1">Involved in coproporphyrin-dependent heme b biosynthesis. Catalyzes the decarboxylation of Fe-coproporphyrin III (coproheme) to heme b (protoheme IX), the last step of the pathway. The reaction occurs in a stepwise manner with a three-propionate intermediate.</text>
</comment>
<comment type="catalytic activity">
    <reaction evidence="1">
        <text>Fe-coproporphyrin III + 2 H2O2 + 2 H(+) = heme b + 2 CO2 + 4 H2O</text>
        <dbReference type="Rhea" id="RHEA:56516"/>
        <dbReference type="ChEBI" id="CHEBI:15377"/>
        <dbReference type="ChEBI" id="CHEBI:15378"/>
        <dbReference type="ChEBI" id="CHEBI:16240"/>
        <dbReference type="ChEBI" id="CHEBI:16526"/>
        <dbReference type="ChEBI" id="CHEBI:60344"/>
        <dbReference type="ChEBI" id="CHEBI:68438"/>
        <dbReference type="EC" id="1.3.98.5"/>
    </reaction>
    <physiologicalReaction direction="left-to-right" evidence="1">
        <dbReference type="Rhea" id="RHEA:56517"/>
    </physiologicalReaction>
</comment>
<comment type="catalytic activity">
    <reaction evidence="1">
        <text>Fe-coproporphyrin III + H2O2 + H(+) = harderoheme III + CO2 + 2 H2O</text>
        <dbReference type="Rhea" id="RHEA:57940"/>
        <dbReference type="ChEBI" id="CHEBI:15377"/>
        <dbReference type="ChEBI" id="CHEBI:15378"/>
        <dbReference type="ChEBI" id="CHEBI:16240"/>
        <dbReference type="ChEBI" id="CHEBI:16526"/>
        <dbReference type="ChEBI" id="CHEBI:68438"/>
        <dbReference type="ChEBI" id="CHEBI:142463"/>
    </reaction>
    <physiologicalReaction direction="left-to-right" evidence="1">
        <dbReference type="Rhea" id="RHEA:57941"/>
    </physiologicalReaction>
</comment>
<comment type="catalytic activity">
    <reaction evidence="1">
        <text>harderoheme III + H2O2 + H(+) = heme b + CO2 + 2 H2O</text>
        <dbReference type="Rhea" id="RHEA:57944"/>
        <dbReference type="ChEBI" id="CHEBI:15377"/>
        <dbReference type="ChEBI" id="CHEBI:15378"/>
        <dbReference type="ChEBI" id="CHEBI:16240"/>
        <dbReference type="ChEBI" id="CHEBI:16526"/>
        <dbReference type="ChEBI" id="CHEBI:60344"/>
        <dbReference type="ChEBI" id="CHEBI:142463"/>
    </reaction>
    <physiologicalReaction direction="left-to-right" evidence="1">
        <dbReference type="Rhea" id="RHEA:57945"/>
    </physiologicalReaction>
</comment>
<comment type="cofactor">
    <cofactor evidence="1">
        <name>Fe-coproporphyrin III</name>
        <dbReference type="ChEBI" id="CHEBI:68438"/>
    </cofactor>
    <text evidence="1">Fe-coproporphyrin III acts both as a substrate and a redox cofactor.</text>
</comment>
<comment type="pathway">
    <text evidence="1">Porphyrin-containing compound metabolism; protoheme biosynthesis.</text>
</comment>
<comment type="similarity">
    <text evidence="1">Belongs to the ChdC family. Type 1 subfamily.</text>
</comment>
<organism>
    <name type="scientific">Bacillus cereus (strain ZK / E33L)</name>
    <dbReference type="NCBI Taxonomy" id="288681"/>
    <lineage>
        <taxon>Bacteria</taxon>
        <taxon>Bacillati</taxon>
        <taxon>Bacillota</taxon>
        <taxon>Bacilli</taxon>
        <taxon>Bacillales</taxon>
        <taxon>Bacillaceae</taxon>
        <taxon>Bacillus</taxon>
        <taxon>Bacillus cereus group</taxon>
    </lineage>
</organism>
<gene>
    <name evidence="1" type="primary">chdC</name>
    <name type="ordered locus">BCE33L5086</name>
</gene>
<feature type="chain" id="PRO_0000294033" description="Coproheme decarboxylase">
    <location>
        <begin position="1"/>
        <end position="247"/>
    </location>
</feature>
<feature type="active site" evidence="1">
    <location>
        <position position="143"/>
    </location>
</feature>
<feature type="binding site" evidence="1">
    <location>
        <position position="129"/>
    </location>
    <ligand>
        <name>Fe-coproporphyrin III</name>
        <dbReference type="ChEBI" id="CHEBI:68438"/>
    </ligand>
</feature>
<feature type="binding site" evidence="1">
    <location>
        <begin position="143"/>
        <end position="147"/>
    </location>
    <ligand>
        <name>Fe-coproporphyrin III</name>
        <dbReference type="ChEBI" id="CHEBI:68438"/>
    </ligand>
</feature>
<feature type="binding site" description="axial binding residue" evidence="1">
    <location>
        <position position="170"/>
    </location>
    <ligand>
        <name>Fe-coproporphyrin III</name>
        <dbReference type="ChEBI" id="CHEBI:68438"/>
    </ligand>
    <ligandPart>
        <name>Fe</name>
        <dbReference type="ChEBI" id="CHEBI:18248"/>
    </ligandPart>
</feature>
<feature type="binding site" evidence="1">
    <location>
        <position position="183"/>
    </location>
    <ligand>
        <name>Fe-coproporphyrin III</name>
        <dbReference type="ChEBI" id="CHEBI:68438"/>
    </ligand>
</feature>
<feature type="binding site" evidence="1">
    <location>
        <position position="221"/>
    </location>
    <ligand>
        <name>Fe-coproporphyrin III</name>
        <dbReference type="ChEBI" id="CHEBI:68438"/>
    </ligand>
</feature>
<dbReference type="EC" id="1.3.98.5" evidence="1"/>
<dbReference type="EMBL" id="CP000001">
    <property type="protein sequence ID" value="AAU15195.1"/>
    <property type="molecule type" value="Genomic_DNA"/>
</dbReference>
<dbReference type="SMR" id="Q630L2"/>
<dbReference type="KEGG" id="bcz:BCE33L5086"/>
<dbReference type="PATRIC" id="fig|288681.22.peg.255"/>
<dbReference type="UniPathway" id="UPA00252"/>
<dbReference type="Proteomes" id="UP000002612">
    <property type="component" value="Chromosome"/>
</dbReference>
<dbReference type="GO" id="GO:0020037">
    <property type="term" value="F:heme binding"/>
    <property type="evidence" value="ECO:0007669"/>
    <property type="project" value="InterPro"/>
</dbReference>
<dbReference type="GO" id="GO:0046872">
    <property type="term" value="F:metal ion binding"/>
    <property type="evidence" value="ECO:0007669"/>
    <property type="project" value="UniProtKB-KW"/>
</dbReference>
<dbReference type="GO" id="GO:0016634">
    <property type="term" value="F:oxidoreductase activity, acting on the CH-CH group of donors, oxygen as acceptor"/>
    <property type="evidence" value="ECO:0007669"/>
    <property type="project" value="UniProtKB-UniRule"/>
</dbReference>
<dbReference type="GO" id="GO:0004601">
    <property type="term" value="F:peroxidase activity"/>
    <property type="evidence" value="ECO:0007669"/>
    <property type="project" value="InterPro"/>
</dbReference>
<dbReference type="GO" id="GO:0006785">
    <property type="term" value="P:heme B biosynthetic process"/>
    <property type="evidence" value="ECO:0007669"/>
    <property type="project" value="UniProtKB-UniRule"/>
</dbReference>
<dbReference type="Gene3D" id="3.30.70.1030">
    <property type="entry name" value="Apc35880, domain 1"/>
    <property type="match status" value="2"/>
</dbReference>
<dbReference type="HAMAP" id="MF_01442">
    <property type="entry name" value="Coproheme_decarbox_1"/>
    <property type="match status" value="1"/>
</dbReference>
<dbReference type="InterPro" id="IPR031332">
    <property type="entry name" value="CHDC"/>
</dbReference>
<dbReference type="InterPro" id="IPR010644">
    <property type="entry name" value="ChdC/CLD"/>
</dbReference>
<dbReference type="InterPro" id="IPR011008">
    <property type="entry name" value="Dimeric_a/b-barrel"/>
</dbReference>
<dbReference type="NCBIfam" id="NF008913">
    <property type="entry name" value="PRK12276.1"/>
    <property type="match status" value="1"/>
</dbReference>
<dbReference type="PANTHER" id="PTHR36843:SF1">
    <property type="entry name" value="COPROHEME DECARBOXYLASE"/>
    <property type="match status" value="1"/>
</dbReference>
<dbReference type="PANTHER" id="PTHR36843">
    <property type="entry name" value="HEME-DEPENDENT PEROXIDASE YWFI-RELATED"/>
    <property type="match status" value="1"/>
</dbReference>
<dbReference type="Pfam" id="PF06778">
    <property type="entry name" value="Chlor_dismutase"/>
    <property type="match status" value="1"/>
</dbReference>
<dbReference type="SUPFAM" id="SSF54909">
    <property type="entry name" value="Dimeric alpha+beta barrel"/>
    <property type="match status" value="1"/>
</dbReference>
<name>CHDC_BACCZ</name>
<accession>Q630L2</accession>
<sequence length="247" mass="28652">MSEATTTLDGWYCLHDLRSIDWAAWKTLSSDERGQAVSEFLNVVEKWNDVAAAKKGSHAMYTVVGQKADIMLMILRPTMEELNEIETELNKTTLAEYMVPAYSYVSVVELSNYLPADEDPYQNPQILARLYPELPKANHICFYPMDKRRQGDDNWYMLPMEERKKMMYSHSKIGRQYAGKVRQVISGSVGFDDFEWGVTLFADDVLQFKKLIYEMRFDEVSARYGEFGTFFVGNILPDEKVEKFLHI</sequence>
<evidence type="ECO:0000255" key="1">
    <source>
        <dbReference type="HAMAP-Rule" id="MF_01442"/>
    </source>
</evidence>
<proteinExistence type="inferred from homology"/>
<keyword id="KW-0349">Heme</keyword>
<keyword id="KW-0350">Heme biosynthesis</keyword>
<keyword id="KW-0408">Iron</keyword>
<keyword id="KW-0479">Metal-binding</keyword>
<keyword id="KW-0560">Oxidoreductase</keyword>